<dbReference type="EC" id="2.7.7.8" evidence="1"/>
<dbReference type="EMBL" id="CP001048">
    <property type="protein sequence ID" value="ACC87500.1"/>
    <property type="molecule type" value="Genomic_DNA"/>
</dbReference>
<dbReference type="RefSeq" id="WP_011191631.1">
    <property type="nucleotide sequence ID" value="NZ_CP009780.1"/>
</dbReference>
<dbReference type="SMR" id="B2K2Q9"/>
<dbReference type="KEGG" id="ypb:YPTS_0514"/>
<dbReference type="PATRIC" id="fig|502801.10.peg.4188"/>
<dbReference type="GO" id="GO:0005829">
    <property type="term" value="C:cytosol"/>
    <property type="evidence" value="ECO:0007669"/>
    <property type="project" value="TreeGrafter"/>
</dbReference>
<dbReference type="GO" id="GO:0000175">
    <property type="term" value="F:3'-5'-RNA exonuclease activity"/>
    <property type="evidence" value="ECO:0007669"/>
    <property type="project" value="TreeGrafter"/>
</dbReference>
<dbReference type="GO" id="GO:0000287">
    <property type="term" value="F:magnesium ion binding"/>
    <property type="evidence" value="ECO:0007669"/>
    <property type="project" value="UniProtKB-UniRule"/>
</dbReference>
<dbReference type="GO" id="GO:0004654">
    <property type="term" value="F:polyribonucleotide nucleotidyltransferase activity"/>
    <property type="evidence" value="ECO:0007669"/>
    <property type="project" value="UniProtKB-UniRule"/>
</dbReference>
<dbReference type="GO" id="GO:0003723">
    <property type="term" value="F:RNA binding"/>
    <property type="evidence" value="ECO:0007669"/>
    <property type="project" value="UniProtKB-UniRule"/>
</dbReference>
<dbReference type="GO" id="GO:0006402">
    <property type="term" value="P:mRNA catabolic process"/>
    <property type="evidence" value="ECO:0007669"/>
    <property type="project" value="UniProtKB-UniRule"/>
</dbReference>
<dbReference type="GO" id="GO:0006396">
    <property type="term" value="P:RNA processing"/>
    <property type="evidence" value="ECO:0007669"/>
    <property type="project" value="InterPro"/>
</dbReference>
<dbReference type="CDD" id="cd02393">
    <property type="entry name" value="KH-I_PNPase"/>
    <property type="match status" value="1"/>
</dbReference>
<dbReference type="CDD" id="cd11363">
    <property type="entry name" value="RNase_PH_PNPase_1"/>
    <property type="match status" value="1"/>
</dbReference>
<dbReference type="CDD" id="cd11364">
    <property type="entry name" value="RNase_PH_PNPase_2"/>
    <property type="match status" value="1"/>
</dbReference>
<dbReference type="CDD" id="cd04472">
    <property type="entry name" value="S1_PNPase"/>
    <property type="match status" value="1"/>
</dbReference>
<dbReference type="FunFam" id="2.40.50.140:FF:000023">
    <property type="entry name" value="Polyribonucleotide nucleotidyltransferase"/>
    <property type="match status" value="1"/>
</dbReference>
<dbReference type="FunFam" id="3.30.1370.10:FF:000001">
    <property type="entry name" value="Polyribonucleotide nucleotidyltransferase"/>
    <property type="match status" value="1"/>
</dbReference>
<dbReference type="FunFam" id="3.30.230.70:FF:000001">
    <property type="entry name" value="Polyribonucleotide nucleotidyltransferase"/>
    <property type="match status" value="1"/>
</dbReference>
<dbReference type="FunFam" id="3.30.230.70:FF:000002">
    <property type="entry name" value="Polyribonucleotide nucleotidyltransferase"/>
    <property type="match status" value="1"/>
</dbReference>
<dbReference type="Gene3D" id="3.30.230.70">
    <property type="entry name" value="GHMP Kinase, N-terminal domain"/>
    <property type="match status" value="2"/>
</dbReference>
<dbReference type="Gene3D" id="3.30.1370.10">
    <property type="entry name" value="K Homology domain, type 1"/>
    <property type="match status" value="1"/>
</dbReference>
<dbReference type="Gene3D" id="2.40.50.140">
    <property type="entry name" value="Nucleic acid-binding proteins"/>
    <property type="match status" value="1"/>
</dbReference>
<dbReference type="HAMAP" id="MF_01595">
    <property type="entry name" value="PNPase"/>
    <property type="match status" value="1"/>
</dbReference>
<dbReference type="InterPro" id="IPR001247">
    <property type="entry name" value="ExoRNase_PH_dom1"/>
</dbReference>
<dbReference type="InterPro" id="IPR015847">
    <property type="entry name" value="ExoRNase_PH_dom2"/>
</dbReference>
<dbReference type="InterPro" id="IPR036345">
    <property type="entry name" value="ExoRNase_PH_dom2_sf"/>
</dbReference>
<dbReference type="InterPro" id="IPR004087">
    <property type="entry name" value="KH_dom"/>
</dbReference>
<dbReference type="InterPro" id="IPR004088">
    <property type="entry name" value="KH_dom_type_1"/>
</dbReference>
<dbReference type="InterPro" id="IPR036612">
    <property type="entry name" value="KH_dom_type_1_sf"/>
</dbReference>
<dbReference type="InterPro" id="IPR012340">
    <property type="entry name" value="NA-bd_OB-fold"/>
</dbReference>
<dbReference type="InterPro" id="IPR012162">
    <property type="entry name" value="PNPase"/>
</dbReference>
<dbReference type="InterPro" id="IPR027408">
    <property type="entry name" value="PNPase/RNase_PH_dom_sf"/>
</dbReference>
<dbReference type="InterPro" id="IPR015848">
    <property type="entry name" value="PNPase_PH_RNA-bd_bac/org-type"/>
</dbReference>
<dbReference type="InterPro" id="IPR036456">
    <property type="entry name" value="PNPase_PH_RNA-bd_sf"/>
</dbReference>
<dbReference type="InterPro" id="IPR020568">
    <property type="entry name" value="Ribosomal_Su5_D2-typ_SF"/>
</dbReference>
<dbReference type="InterPro" id="IPR003029">
    <property type="entry name" value="S1_domain"/>
</dbReference>
<dbReference type="NCBIfam" id="TIGR03591">
    <property type="entry name" value="polynuc_phos"/>
    <property type="match status" value="1"/>
</dbReference>
<dbReference type="NCBIfam" id="NF008805">
    <property type="entry name" value="PRK11824.1"/>
    <property type="match status" value="1"/>
</dbReference>
<dbReference type="PANTHER" id="PTHR11252">
    <property type="entry name" value="POLYRIBONUCLEOTIDE NUCLEOTIDYLTRANSFERASE"/>
    <property type="match status" value="1"/>
</dbReference>
<dbReference type="PANTHER" id="PTHR11252:SF0">
    <property type="entry name" value="POLYRIBONUCLEOTIDE NUCLEOTIDYLTRANSFERASE 1, MITOCHONDRIAL"/>
    <property type="match status" value="1"/>
</dbReference>
<dbReference type="Pfam" id="PF00013">
    <property type="entry name" value="KH_1"/>
    <property type="match status" value="1"/>
</dbReference>
<dbReference type="Pfam" id="PF03726">
    <property type="entry name" value="PNPase"/>
    <property type="match status" value="1"/>
</dbReference>
<dbReference type="Pfam" id="PF01138">
    <property type="entry name" value="RNase_PH"/>
    <property type="match status" value="2"/>
</dbReference>
<dbReference type="Pfam" id="PF03725">
    <property type="entry name" value="RNase_PH_C"/>
    <property type="match status" value="2"/>
</dbReference>
<dbReference type="Pfam" id="PF00575">
    <property type="entry name" value="S1"/>
    <property type="match status" value="1"/>
</dbReference>
<dbReference type="PIRSF" id="PIRSF005499">
    <property type="entry name" value="PNPase"/>
    <property type="match status" value="1"/>
</dbReference>
<dbReference type="SMART" id="SM00322">
    <property type="entry name" value="KH"/>
    <property type="match status" value="1"/>
</dbReference>
<dbReference type="SMART" id="SM00316">
    <property type="entry name" value="S1"/>
    <property type="match status" value="1"/>
</dbReference>
<dbReference type="SUPFAM" id="SSF54791">
    <property type="entry name" value="Eukaryotic type KH-domain (KH-domain type I)"/>
    <property type="match status" value="1"/>
</dbReference>
<dbReference type="SUPFAM" id="SSF50249">
    <property type="entry name" value="Nucleic acid-binding proteins"/>
    <property type="match status" value="1"/>
</dbReference>
<dbReference type="SUPFAM" id="SSF46915">
    <property type="entry name" value="Polynucleotide phosphorylase/guanosine pentaphosphate synthase (PNPase/GPSI), domain 3"/>
    <property type="match status" value="1"/>
</dbReference>
<dbReference type="SUPFAM" id="SSF55666">
    <property type="entry name" value="Ribonuclease PH domain 2-like"/>
    <property type="match status" value="2"/>
</dbReference>
<dbReference type="SUPFAM" id="SSF54211">
    <property type="entry name" value="Ribosomal protein S5 domain 2-like"/>
    <property type="match status" value="2"/>
</dbReference>
<dbReference type="PROSITE" id="PS50084">
    <property type="entry name" value="KH_TYPE_1"/>
    <property type="match status" value="1"/>
</dbReference>
<dbReference type="PROSITE" id="PS50126">
    <property type="entry name" value="S1"/>
    <property type="match status" value="1"/>
</dbReference>
<name>PNP_YERPB</name>
<reference key="1">
    <citation type="submission" date="2008-04" db="EMBL/GenBank/DDBJ databases">
        <title>Complete sequence of Yersinia pseudotuberculosis PB1/+.</title>
        <authorList>
            <person name="Copeland A."/>
            <person name="Lucas S."/>
            <person name="Lapidus A."/>
            <person name="Glavina del Rio T."/>
            <person name="Dalin E."/>
            <person name="Tice H."/>
            <person name="Bruce D."/>
            <person name="Goodwin L."/>
            <person name="Pitluck S."/>
            <person name="Munk A.C."/>
            <person name="Brettin T."/>
            <person name="Detter J.C."/>
            <person name="Han C."/>
            <person name="Tapia R."/>
            <person name="Schmutz J."/>
            <person name="Larimer F."/>
            <person name="Land M."/>
            <person name="Hauser L."/>
            <person name="Challacombe J.F."/>
            <person name="Green L."/>
            <person name="Lindler L.E."/>
            <person name="Nikolich M.P."/>
            <person name="Richardson P."/>
        </authorList>
    </citation>
    <scope>NUCLEOTIDE SEQUENCE [LARGE SCALE GENOMIC DNA]</scope>
    <source>
        <strain>PB1/+</strain>
    </source>
</reference>
<organism>
    <name type="scientific">Yersinia pseudotuberculosis serotype IB (strain PB1/+)</name>
    <dbReference type="NCBI Taxonomy" id="502801"/>
    <lineage>
        <taxon>Bacteria</taxon>
        <taxon>Pseudomonadati</taxon>
        <taxon>Pseudomonadota</taxon>
        <taxon>Gammaproteobacteria</taxon>
        <taxon>Enterobacterales</taxon>
        <taxon>Yersiniaceae</taxon>
        <taxon>Yersinia</taxon>
    </lineage>
</organism>
<feature type="chain" id="PRO_1000192511" description="Polyribonucleotide nucleotidyltransferase">
    <location>
        <begin position="1"/>
        <end position="704"/>
    </location>
</feature>
<feature type="domain" description="KH" evidence="1">
    <location>
        <begin position="553"/>
        <end position="612"/>
    </location>
</feature>
<feature type="domain" description="S1 motif" evidence="1">
    <location>
        <begin position="622"/>
        <end position="690"/>
    </location>
</feature>
<feature type="binding site" evidence="1">
    <location>
        <position position="486"/>
    </location>
    <ligand>
        <name>Mg(2+)</name>
        <dbReference type="ChEBI" id="CHEBI:18420"/>
    </ligand>
</feature>
<feature type="binding site" evidence="1">
    <location>
        <position position="492"/>
    </location>
    <ligand>
        <name>Mg(2+)</name>
        <dbReference type="ChEBI" id="CHEBI:18420"/>
    </ligand>
</feature>
<proteinExistence type="inferred from homology"/>
<keyword id="KW-0963">Cytoplasm</keyword>
<keyword id="KW-0460">Magnesium</keyword>
<keyword id="KW-0479">Metal-binding</keyword>
<keyword id="KW-0548">Nucleotidyltransferase</keyword>
<keyword id="KW-0694">RNA-binding</keyword>
<keyword id="KW-0808">Transferase</keyword>
<accession>B2K2Q9</accession>
<protein>
    <recommendedName>
        <fullName evidence="1">Polyribonucleotide nucleotidyltransferase</fullName>
        <ecNumber evidence="1">2.7.7.8</ecNumber>
    </recommendedName>
    <alternativeName>
        <fullName evidence="1">Polynucleotide phosphorylase</fullName>
        <shortName evidence="1">PNPase</shortName>
    </alternativeName>
</protein>
<comment type="function">
    <text evidence="1">Involved in mRNA degradation. Catalyzes the phosphorolysis of single-stranded polyribonucleotides processively in the 3'- to 5'-direction.</text>
</comment>
<comment type="catalytic activity">
    <reaction evidence="1">
        <text>RNA(n+1) + phosphate = RNA(n) + a ribonucleoside 5'-diphosphate</text>
        <dbReference type="Rhea" id="RHEA:22096"/>
        <dbReference type="Rhea" id="RHEA-COMP:14527"/>
        <dbReference type="Rhea" id="RHEA-COMP:17342"/>
        <dbReference type="ChEBI" id="CHEBI:43474"/>
        <dbReference type="ChEBI" id="CHEBI:57930"/>
        <dbReference type="ChEBI" id="CHEBI:140395"/>
        <dbReference type="EC" id="2.7.7.8"/>
    </reaction>
</comment>
<comment type="cofactor">
    <cofactor evidence="1">
        <name>Mg(2+)</name>
        <dbReference type="ChEBI" id="CHEBI:18420"/>
    </cofactor>
</comment>
<comment type="subunit">
    <text evidence="1">Component of the RNA degradosome, which is a multiprotein complex involved in RNA processing and mRNA degradation.</text>
</comment>
<comment type="subcellular location">
    <subcellularLocation>
        <location evidence="1">Cytoplasm</location>
    </subcellularLocation>
</comment>
<comment type="similarity">
    <text evidence="1">Belongs to the polyribonucleotide nucleotidyltransferase family.</text>
</comment>
<sequence length="704" mass="76125">MLTPIIRKFQYGQHTVTIETGMMARQATAAVMVSMDDTAVFVTVVGQKKAKPGQSFFPLTVNYQERTYAAGRIPGSFFRREGRPSEGETLTSRLIDRPIRPLFPDSFLNEVQVIATVVSVNPQINPDIVALIGASAALSLSGIPFNGPIGAARVGFINDQYVLNPTTDELKESRLDLVVAGTAGAVLMVESEADILSEEQMLGAVVFGHEQQQVVIENINALVAEAGKPKWDWQAEPVNEALHARVAELAEARLGDAYRITEKQERYTQVDAIKADVTEALLAQDDTLDAAEIQDILASVEKNVVRSRVLRGEPRIDGREKDMIRGLDVRTGILPRTHGSALFTRGETQALVTATLGTARDAQNIDELMGERTDSFLLHYNFPPYCVGETGMVGSPKRREIGHGRLAKRGVLAVMPSASEFPYTIRVVSEITESNGSSSMASVCGASLALMDAGVPIKAAVAGIAMGLVKEGDNFVVLSDILGDEDHLGDMDFKVAGSRDGVTALQMDIKIEGITREIMQVALNQAKGARLHILGVMEQAISTPRGDISEFAPRIYTMKINPEKIKDVIGKGGSVIRALTDETGTTIEIEDDGTIKIAATDGDKAKHAIRRIEEITAEIEVGRIYAGKVTRIVDFGAFVAIGGGKEGLVHISQIADKRVEKVTDYLQMGQDVPVKVMEVDRQGRIRLSIKEATTPDAEAPEAAE</sequence>
<gene>
    <name evidence="1" type="primary">pnp</name>
    <name type="ordered locus">YPTS_0514</name>
</gene>
<evidence type="ECO:0000255" key="1">
    <source>
        <dbReference type="HAMAP-Rule" id="MF_01595"/>
    </source>
</evidence>